<name>FTSB_YERPG</name>
<protein>
    <recommendedName>
        <fullName evidence="1">Cell division protein FtsB</fullName>
    </recommendedName>
</protein>
<reference key="1">
    <citation type="journal article" date="2010" name="J. Bacteriol.">
        <title>Genome sequence of the deep-rooted Yersinia pestis strain Angola reveals new insights into the evolution and pangenome of the plague bacterium.</title>
        <authorList>
            <person name="Eppinger M."/>
            <person name="Worsham P.L."/>
            <person name="Nikolich M.P."/>
            <person name="Riley D.R."/>
            <person name="Sebastian Y."/>
            <person name="Mou S."/>
            <person name="Achtman M."/>
            <person name="Lindler L.E."/>
            <person name="Ravel J."/>
        </authorList>
    </citation>
    <scope>NUCLEOTIDE SEQUENCE [LARGE SCALE GENOMIC DNA]</scope>
    <source>
        <strain>Angola</strain>
    </source>
</reference>
<dbReference type="EMBL" id="CP000901">
    <property type="protein sequence ID" value="ABX86251.1"/>
    <property type="molecule type" value="Genomic_DNA"/>
</dbReference>
<dbReference type="RefSeq" id="WP_002209390.1">
    <property type="nucleotide sequence ID" value="NZ_CP009935.1"/>
</dbReference>
<dbReference type="SMR" id="A9R120"/>
<dbReference type="GeneID" id="57975347"/>
<dbReference type="KEGG" id="ypg:YpAngola_A0965"/>
<dbReference type="PATRIC" id="fig|349746.12.peg.1913"/>
<dbReference type="GO" id="GO:0032153">
    <property type="term" value="C:cell division site"/>
    <property type="evidence" value="ECO:0007669"/>
    <property type="project" value="UniProtKB-UniRule"/>
</dbReference>
<dbReference type="GO" id="GO:0030428">
    <property type="term" value="C:cell septum"/>
    <property type="evidence" value="ECO:0007669"/>
    <property type="project" value="TreeGrafter"/>
</dbReference>
<dbReference type="GO" id="GO:0005886">
    <property type="term" value="C:plasma membrane"/>
    <property type="evidence" value="ECO:0007669"/>
    <property type="project" value="UniProtKB-SubCell"/>
</dbReference>
<dbReference type="GO" id="GO:0043093">
    <property type="term" value="P:FtsZ-dependent cytokinesis"/>
    <property type="evidence" value="ECO:0007669"/>
    <property type="project" value="UniProtKB-UniRule"/>
</dbReference>
<dbReference type="Gene3D" id="1.20.5.400">
    <property type="match status" value="1"/>
</dbReference>
<dbReference type="HAMAP" id="MF_00599">
    <property type="entry name" value="FtsB"/>
    <property type="match status" value="1"/>
</dbReference>
<dbReference type="InterPro" id="IPR023081">
    <property type="entry name" value="Cell_div_FtsB"/>
</dbReference>
<dbReference type="InterPro" id="IPR007060">
    <property type="entry name" value="FtsL/DivIC"/>
</dbReference>
<dbReference type="NCBIfam" id="NF002058">
    <property type="entry name" value="PRK00888.1"/>
    <property type="match status" value="1"/>
</dbReference>
<dbReference type="PANTHER" id="PTHR37485">
    <property type="entry name" value="CELL DIVISION PROTEIN FTSB"/>
    <property type="match status" value="1"/>
</dbReference>
<dbReference type="PANTHER" id="PTHR37485:SF1">
    <property type="entry name" value="CELL DIVISION PROTEIN FTSB"/>
    <property type="match status" value="1"/>
</dbReference>
<dbReference type="Pfam" id="PF04977">
    <property type="entry name" value="DivIC"/>
    <property type="match status" value="1"/>
</dbReference>
<gene>
    <name evidence="1" type="primary">ftsB</name>
    <name type="ordered locus">YpAngola_A0965</name>
</gene>
<accession>A9R120</accession>
<evidence type="ECO:0000255" key="1">
    <source>
        <dbReference type="HAMAP-Rule" id="MF_00599"/>
    </source>
</evidence>
<feature type="chain" id="PRO_1000129954" description="Cell division protein FtsB">
    <location>
        <begin position="1"/>
        <end position="106"/>
    </location>
</feature>
<feature type="topological domain" description="Cytoplasmic" evidence="1">
    <location>
        <begin position="1"/>
        <end position="3"/>
    </location>
</feature>
<feature type="transmembrane region" description="Helical" evidence="1">
    <location>
        <begin position="4"/>
        <end position="21"/>
    </location>
</feature>
<feature type="topological domain" description="Periplasmic" evidence="1">
    <location>
        <begin position="22"/>
        <end position="106"/>
    </location>
</feature>
<feature type="coiled-coil region" evidence="1">
    <location>
        <begin position="31"/>
        <end position="62"/>
    </location>
</feature>
<keyword id="KW-0131">Cell cycle</keyword>
<keyword id="KW-0132">Cell division</keyword>
<keyword id="KW-0997">Cell inner membrane</keyword>
<keyword id="KW-1003">Cell membrane</keyword>
<keyword id="KW-0175">Coiled coil</keyword>
<keyword id="KW-0472">Membrane</keyword>
<keyword id="KW-0812">Transmembrane</keyword>
<keyword id="KW-1133">Transmembrane helix</keyword>
<sequence>MGKLTLLLLVLLGWLQYSLWLGKNGIHDFVRVKEDVAAQEANNSTLKARNDQLFAEIDDLNGGQEAIEERARNELGMIKPGESFYRLVPDQSRRNAGTPSTQNNAQ</sequence>
<proteinExistence type="inferred from homology"/>
<organism>
    <name type="scientific">Yersinia pestis bv. Antiqua (strain Angola)</name>
    <dbReference type="NCBI Taxonomy" id="349746"/>
    <lineage>
        <taxon>Bacteria</taxon>
        <taxon>Pseudomonadati</taxon>
        <taxon>Pseudomonadota</taxon>
        <taxon>Gammaproteobacteria</taxon>
        <taxon>Enterobacterales</taxon>
        <taxon>Yersiniaceae</taxon>
        <taxon>Yersinia</taxon>
    </lineage>
</organism>
<comment type="function">
    <text evidence="1">Essential cell division protein. May link together the upstream cell division proteins, which are predominantly cytoplasmic, with the downstream cell division proteins, which are predominantly periplasmic.</text>
</comment>
<comment type="subunit">
    <text evidence="1">Part of a complex composed of FtsB, FtsL and FtsQ.</text>
</comment>
<comment type="subcellular location">
    <subcellularLocation>
        <location evidence="1">Cell inner membrane</location>
        <topology evidence="1">Single-pass type II membrane protein</topology>
    </subcellularLocation>
    <text evidence="1">Localizes to the division septum.</text>
</comment>
<comment type="similarity">
    <text evidence="1">Belongs to the FtsB family.</text>
</comment>